<name>DAD3_EREGS</name>
<keyword id="KW-0131">Cell cycle</keyword>
<keyword id="KW-0132">Cell division</keyword>
<keyword id="KW-0137">Centromere</keyword>
<keyword id="KW-0158">Chromosome</keyword>
<keyword id="KW-0159">Chromosome partition</keyword>
<keyword id="KW-0963">Cytoplasm</keyword>
<keyword id="KW-0206">Cytoskeleton</keyword>
<keyword id="KW-0995">Kinetochore</keyword>
<keyword id="KW-0493">Microtubule</keyword>
<keyword id="KW-0498">Mitosis</keyword>
<keyword id="KW-0539">Nucleus</keyword>
<keyword id="KW-1185">Reference proteome</keyword>
<proteinExistence type="inferred from homology"/>
<gene>
    <name type="primary">DAD3</name>
    <name type="ordered locus">AFL021C</name>
</gene>
<evidence type="ECO:0000250" key="1">
    <source>
        <dbReference type="UniProtKB" id="P62505"/>
    </source>
</evidence>
<evidence type="ECO:0000250" key="2">
    <source>
        <dbReference type="UniProtKB" id="P69850"/>
    </source>
</evidence>
<evidence type="ECO:0000305" key="3"/>
<reference key="1">
    <citation type="journal article" date="2004" name="Science">
        <title>The Ashbya gossypii genome as a tool for mapping the ancient Saccharomyces cerevisiae genome.</title>
        <authorList>
            <person name="Dietrich F.S."/>
            <person name="Voegeli S."/>
            <person name="Brachat S."/>
            <person name="Lerch A."/>
            <person name="Gates K."/>
            <person name="Steiner S."/>
            <person name="Mohr C."/>
            <person name="Poehlmann R."/>
            <person name="Luedi P."/>
            <person name="Choi S."/>
            <person name="Wing R.A."/>
            <person name="Flavier A."/>
            <person name="Gaffney T.D."/>
            <person name="Philippsen P."/>
        </authorList>
    </citation>
    <scope>NUCLEOTIDE SEQUENCE [LARGE SCALE GENOMIC DNA]</scope>
    <source>
        <strain>ATCC 10895 / CBS 109.51 / FGSC 9923 / NRRL Y-1056</strain>
    </source>
</reference>
<reference key="2">
    <citation type="journal article" date="2013" name="G3 (Bethesda)">
        <title>Genomes of Ashbya fungi isolated from insects reveal four mating-type loci, numerous translocations, lack of transposons, and distinct gene duplications.</title>
        <authorList>
            <person name="Dietrich F.S."/>
            <person name="Voegeli S."/>
            <person name="Kuo S."/>
            <person name="Philippsen P."/>
        </authorList>
    </citation>
    <scope>GENOME REANNOTATION</scope>
    <source>
        <strain>ATCC 10895 / CBS 109.51 / FGSC 9923 / NRRL Y-1056</strain>
    </source>
</reference>
<comment type="function">
    <text evidence="2">Component of the DASH complex that connects microtubules with kinetochores and couples microtubule depolymerisation to chromosome movement; it is involved in retrieving kinetochores to the spindle poles before their re-orientation on the spindle in early mitosis and allows microtubule depolymerization to pull chromosomes apart and resist detachment during anaphase. Kinetochores, consisting of a centromere-associated inner segment and a microtubule-contacting outer segment, play a crucial role in chromosome segregation by mediating the physical connection between centromeric DNA and microtubules. Kinetochores also serve as an input point for the spindle assembly checkpoint, which delays anaphase until all chromosomes have bioriented on the mitotic spindle.</text>
</comment>
<comment type="subunit">
    <text evidence="1 2">Component of the DASH complex consisting of ASK1, DAD1, DAD2, DAD3, DAD4, DAM1, DUO1, HSK3, SPC19 and SPC34, with a stoichiometry of one copy of each subunit per complex. Multiple DASH complexes oligomerize to form a ring that encircles spindle microtubules and organizes the rod-like NDC80 complexes of the outer kinetochore. DASH complex oligomerization strengthens microtubule attachments (By similarity). On cytoplasmic microtubules, DASH complexes appear to form patches instead of rings (By similarity).</text>
</comment>
<comment type="subcellular location">
    <subcellularLocation>
        <location evidence="2">Nucleus</location>
    </subcellularLocation>
    <subcellularLocation>
        <location evidence="2">Cytoplasm</location>
        <location evidence="2">Cytoskeleton</location>
        <location evidence="2">Spindle</location>
    </subcellularLocation>
    <subcellularLocation>
        <location evidence="2">Chromosome</location>
        <location evidence="2">Centromere</location>
        <location evidence="2">Kinetochore</location>
    </subcellularLocation>
</comment>
<comment type="similarity">
    <text evidence="3">Belongs to the DASH complex DAD3 family.</text>
</comment>
<sequence length="85" mass="9359">MSDALSTLQRSVLEKYRTLADCLHELNDTLVELNTDSDTNPEQVLAQMREIEVKIALVGTLLKGSVYSLVLQRNMGKQAPGGKAK</sequence>
<protein>
    <recommendedName>
        <fullName>DASH complex subunit DAD3</fullName>
    </recommendedName>
    <alternativeName>
        <fullName>Outer kinetochore protein DAD3</fullName>
    </alternativeName>
</protein>
<feature type="chain" id="PRO_0000175946" description="DASH complex subunit DAD3">
    <location>
        <begin position="1"/>
        <end position="85"/>
    </location>
</feature>
<organism>
    <name type="scientific">Eremothecium gossypii (strain ATCC 10895 / CBS 109.51 / FGSC 9923 / NRRL Y-1056)</name>
    <name type="common">Yeast</name>
    <name type="synonym">Ashbya gossypii</name>
    <dbReference type="NCBI Taxonomy" id="284811"/>
    <lineage>
        <taxon>Eukaryota</taxon>
        <taxon>Fungi</taxon>
        <taxon>Dikarya</taxon>
        <taxon>Ascomycota</taxon>
        <taxon>Saccharomycotina</taxon>
        <taxon>Saccharomycetes</taxon>
        <taxon>Saccharomycetales</taxon>
        <taxon>Saccharomycetaceae</taxon>
        <taxon>Eremothecium</taxon>
    </lineage>
</organism>
<accession>Q754U2</accession>
<dbReference type="EMBL" id="AE016819">
    <property type="protein sequence ID" value="AAS53351.1"/>
    <property type="molecule type" value="Genomic_DNA"/>
</dbReference>
<dbReference type="RefSeq" id="NP_985527.1">
    <property type="nucleotide sequence ID" value="NM_210881.1"/>
</dbReference>
<dbReference type="SMR" id="Q754U2"/>
<dbReference type="FunCoup" id="Q754U2">
    <property type="interactions" value="15"/>
</dbReference>
<dbReference type="STRING" id="284811.Q754U2"/>
<dbReference type="EnsemblFungi" id="AAS53351">
    <property type="protein sequence ID" value="AAS53351"/>
    <property type="gene ID" value="AGOS_AFL021C"/>
</dbReference>
<dbReference type="GeneID" id="4621760"/>
<dbReference type="KEGG" id="ago:AGOS_AFL021C"/>
<dbReference type="eggNOG" id="ENOG502S7SV">
    <property type="taxonomic scope" value="Eukaryota"/>
</dbReference>
<dbReference type="HOGENOM" id="CLU_118180_2_1_1"/>
<dbReference type="InParanoid" id="Q754U2"/>
<dbReference type="OMA" id="RNMHISQ"/>
<dbReference type="OrthoDB" id="2443965at2759"/>
<dbReference type="Proteomes" id="UP000000591">
    <property type="component" value="Chromosome VI"/>
</dbReference>
<dbReference type="GO" id="GO:0005737">
    <property type="term" value="C:cytoplasm"/>
    <property type="evidence" value="ECO:0007669"/>
    <property type="project" value="UniProtKB-KW"/>
</dbReference>
<dbReference type="GO" id="GO:0042729">
    <property type="term" value="C:DASH complex"/>
    <property type="evidence" value="ECO:0000250"/>
    <property type="project" value="UniProtKB"/>
</dbReference>
<dbReference type="GO" id="GO:0005874">
    <property type="term" value="C:microtubule"/>
    <property type="evidence" value="ECO:0007669"/>
    <property type="project" value="UniProtKB-KW"/>
</dbReference>
<dbReference type="GO" id="GO:0072686">
    <property type="term" value="C:mitotic spindle"/>
    <property type="evidence" value="ECO:0007669"/>
    <property type="project" value="InterPro"/>
</dbReference>
<dbReference type="GO" id="GO:0051010">
    <property type="term" value="F:microtubule plus-end binding"/>
    <property type="evidence" value="ECO:0007669"/>
    <property type="project" value="EnsemblFungi"/>
</dbReference>
<dbReference type="GO" id="GO:0008608">
    <property type="term" value="P:attachment of spindle microtubules to kinetochore"/>
    <property type="evidence" value="ECO:0000250"/>
    <property type="project" value="UniProtKB"/>
</dbReference>
<dbReference type="GO" id="GO:0051301">
    <property type="term" value="P:cell division"/>
    <property type="evidence" value="ECO:0007669"/>
    <property type="project" value="UniProtKB-KW"/>
</dbReference>
<dbReference type="GO" id="GO:1990758">
    <property type="term" value="P:mitotic sister chromatid biorientation"/>
    <property type="evidence" value="ECO:0000250"/>
    <property type="project" value="UniProtKB"/>
</dbReference>
<dbReference type="GO" id="GO:0051987">
    <property type="term" value="P:positive regulation of attachment of spindle microtubules to kinetochore"/>
    <property type="evidence" value="ECO:0007669"/>
    <property type="project" value="EnsemblFungi"/>
</dbReference>
<dbReference type="GO" id="GO:0031116">
    <property type="term" value="P:positive regulation of microtubule polymerization"/>
    <property type="evidence" value="ECO:0007669"/>
    <property type="project" value="EnsemblFungi"/>
</dbReference>
<dbReference type="GO" id="GO:1990976">
    <property type="term" value="P:protein transport along microtubule to mitotic spindle pole body"/>
    <property type="evidence" value="ECO:0000250"/>
    <property type="project" value="UniProtKB"/>
</dbReference>
<dbReference type="InterPro" id="IPR013965">
    <property type="entry name" value="DASH_Dad3"/>
</dbReference>
<dbReference type="PANTHER" id="PTHR28017">
    <property type="entry name" value="DASH COMPLEX SUBUNIT DAD3"/>
    <property type="match status" value="1"/>
</dbReference>
<dbReference type="PANTHER" id="PTHR28017:SF1">
    <property type="entry name" value="DASH COMPLEX SUBUNIT DAD3"/>
    <property type="match status" value="1"/>
</dbReference>
<dbReference type="Pfam" id="PF08656">
    <property type="entry name" value="DASH_Dad3"/>
    <property type="match status" value="1"/>
</dbReference>